<accession>Q0BV27</accession>
<feature type="chain" id="PRO_0000332463" description="UDP-N-acetylenolpyruvoylglucosamine reductase">
    <location>
        <begin position="1"/>
        <end position="309"/>
    </location>
</feature>
<feature type="domain" description="FAD-binding PCMH-type" evidence="1">
    <location>
        <begin position="33"/>
        <end position="195"/>
    </location>
</feature>
<feature type="active site" evidence="1">
    <location>
        <position position="175"/>
    </location>
</feature>
<feature type="active site" description="Proton donor" evidence="1">
    <location>
        <position position="224"/>
    </location>
</feature>
<feature type="active site" evidence="1">
    <location>
        <position position="294"/>
    </location>
</feature>
<protein>
    <recommendedName>
        <fullName evidence="1">UDP-N-acetylenolpyruvoylglucosamine reductase</fullName>
        <ecNumber evidence="1">1.3.1.98</ecNumber>
    </recommendedName>
    <alternativeName>
        <fullName evidence="1">UDP-N-acetylmuramate dehydrogenase</fullName>
    </alternativeName>
</protein>
<dbReference type="EC" id="1.3.1.98" evidence="1"/>
<dbReference type="EMBL" id="CP000394">
    <property type="protein sequence ID" value="ABI61325.1"/>
    <property type="molecule type" value="Genomic_DNA"/>
</dbReference>
<dbReference type="RefSeq" id="WP_011631135.1">
    <property type="nucleotide sequence ID" value="NC_008343.2"/>
</dbReference>
<dbReference type="SMR" id="Q0BV27"/>
<dbReference type="STRING" id="391165.GbCGDNIH1_0427"/>
<dbReference type="KEGG" id="gbe:GbCGDNIH1_0427"/>
<dbReference type="eggNOG" id="COG0812">
    <property type="taxonomic scope" value="Bacteria"/>
</dbReference>
<dbReference type="HOGENOM" id="CLU_035304_1_0_5"/>
<dbReference type="OrthoDB" id="9804753at2"/>
<dbReference type="UniPathway" id="UPA00219"/>
<dbReference type="Proteomes" id="UP000001963">
    <property type="component" value="Chromosome"/>
</dbReference>
<dbReference type="GO" id="GO:0005829">
    <property type="term" value="C:cytosol"/>
    <property type="evidence" value="ECO:0007669"/>
    <property type="project" value="TreeGrafter"/>
</dbReference>
<dbReference type="GO" id="GO:0071949">
    <property type="term" value="F:FAD binding"/>
    <property type="evidence" value="ECO:0007669"/>
    <property type="project" value="InterPro"/>
</dbReference>
<dbReference type="GO" id="GO:0008762">
    <property type="term" value="F:UDP-N-acetylmuramate dehydrogenase activity"/>
    <property type="evidence" value="ECO:0007669"/>
    <property type="project" value="UniProtKB-UniRule"/>
</dbReference>
<dbReference type="GO" id="GO:0051301">
    <property type="term" value="P:cell division"/>
    <property type="evidence" value="ECO:0007669"/>
    <property type="project" value="UniProtKB-KW"/>
</dbReference>
<dbReference type="GO" id="GO:0071555">
    <property type="term" value="P:cell wall organization"/>
    <property type="evidence" value="ECO:0007669"/>
    <property type="project" value="UniProtKB-KW"/>
</dbReference>
<dbReference type="GO" id="GO:0009252">
    <property type="term" value="P:peptidoglycan biosynthetic process"/>
    <property type="evidence" value="ECO:0007669"/>
    <property type="project" value="UniProtKB-UniRule"/>
</dbReference>
<dbReference type="GO" id="GO:0008360">
    <property type="term" value="P:regulation of cell shape"/>
    <property type="evidence" value="ECO:0007669"/>
    <property type="project" value="UniProtKB-KW"/>
</dbReference>
<dbReference type="Gene3D" id="3.30.465.10">
    <property type="match status" value="1"/>
</dbReference>
<dbReference type="Gene3D" id="3.90.78.10">
    <property type="entry name" value="UDP-N-acetylenolpyruvoylglucosamine reductase, C-terminal domain"/>
    <property type="match status" value="1"/>
</dbReference>
<dbReference type="Gene3D" id="3.30.43.10">
    <property type="entry name" value="Uridine Diphospho-n-acetylenolpyruvylglucosamine Reductase, domain 2"/>
    <property type="match status" value="1"/>
</dbReference>
<dbReference type="HAMAP" id="MF_00037">
    <property type="entry name" value="MurB"/>
    <property type="match status" value="1"/>
</dbReference>
<dbReference type="InterPro" id="IPR016166">
    <property type="entry name" value="FAD-bd_PCMH"/>
</dbReference>
<dbReference type="InterPro" id="IPR036318">
    <property type="entry name" value="FAD-bd_PCMH-like_sf"/>
</dbReference>
<dbReference type="InterPro" id="IPR016167">
    <property type="entry name" value="FAD-bd_PCMH_sub1"/>
</dbReference>
<dbReference type="InterPro" id="IPR016169">
    <property type="entry name" value="FAD-bd_PCMH_sub2"/>
</dbReference>
<dbReference type="InterPro" id="IPR003170">
    <property type="entry name" value="MurB"/>
</dbReference>
<dbReference type="InterPro" id="IPR011601">
    <property type="entry name" value="MurB_C"/>
</dbReference>
<dbReference type="InterPro" id="IPR036635">
    <property type="entry name" value="MurB_C_sf"/>
</dbReference>
<dbReference type="InterPro" id="IPR006094">
    <property type="entry name" value="Oxid_FAD_bind_N"/>
</dbReference>
<dbReference type="NCBIfam" id="TIGR00179">
    <property type="entry name" value="murB"/>
    <property type="match status" value="1"/>
</dbReference>
<dbReference type="NCBIfam" id="NF010480">
    <property type="entry name" value="PRK13905.1"/>
    <property type="match status" value="1"/>
</dbReference>
<dbReference type="PANTHER" id="PTHR21071">
    <property type="entry name" value="UDP-N-ACETYLENOLPYRUVOYLGLUCOSAMINE REDUCTASE"/>
    <property type="match status" value="1"/>
</dbReference>
<dbReference type="PANTHER" id="PTHR21071:SF4">
    <property type="entry name" value="UDP-N-ACETYLENOLPYRUVOYLGLUCOSAMINE REDUCTASE"/>
    <property type="match status" value="1"/>
</dbReference>
<dbReference type="Pfam" id="PF01565">
    <property type="entry name" value="FAD_binding_4"/>
    <property type="match status" value="1"/>
</dbReference>
<dbReference type="Pfam" id="PF02873">
    <property type="entry name" value="MurB_C"/>
    <property type="match status" value="1"/>
</dbReference>
<dbReference type="SUPFAM" id="SSF56176">
    <property type="entry name" value="FAD-binding/transporter-associated domain-like"/>
    <property type="match status" value="1"/>
</dbReference>
<dbReference type="SUPFAM" id="SSF56194">
    <property type="entry name" value="Uridine diphospho-N-Acetylenolpyruvylglucosamine reductase, MurB, C-terminal domain"/>
    <property type="match status" value="1"/>
</dbReference>
<dbReference type="PROSITE" id="PS51387">
    <property type="entry name" value="FAD_PCMH"/>
    <property type="match status" value="1"/>
</dbReference>
<gene>
    <name evidence="1" type="primary">murB</name>
    <name type="ordered locus">GbCGDNIH1_0427</name>
</gene>
<organism>
    <name type="scientific">Granulibacter bethesdensis (strain ATCC BAA-1260 / CGDNIH1)</name>
    <dbReference type="NCBI Taxonomy" id="391165"/>
    <lineage>
        <taxon>Bacteria</taxon>
        <taxon>Pseudomonadati</taxon>
        <taxon>Pseudomonadota</taxon>
        <taxon>Alphaproteobacteria</taxon>
        <taxon>Acetobacterales</taxon>
        <taxon>Acetobacteraceae</taxon>
        <taxon>Granulibacter</taxon>
    </lineage>
</organism>
<name>MURB_GRABC</name>
<proteinExistence type="inferred from homology"/>
<keyword id="KW-0131">Cell cycle</keyword>
<keyword id="KW-0132">Cell division</keyword>
<keyword id="KW-0133">Cell shape</keyword>
<keyword id="KW-0961">Cell wall biogenesis/degradation</keyword>
<keyword id="KW-0963">Cytoplasm</keyword>
<keyword id="KW-0274">FAD</keyword>
<keyword id="KW-0285">Flavoprotein</keyword>
<keyword id="KW-0521">NADP</keyword>
<keyword id="KW-0560">Oxidoreductase</keyword>
<keyword id="KW-0573">Peptidoglycan synthesis</keyword>
<keyword id="KW-1185">Reference proteome</keyword>
<sequence>MIVSAQQNPDVFTALRGRVTHAAPLAPQTWFRVGGQAETLFRPADTDDLCTLQRRVSNLVPMTIIGAASNLIIRDGGLPGITVKLGRGFNEITTDGDGMIAGAAALDATVAEHAAQAGLAGLEFLCGIPGTIGGAIAMNAGAYGSDIASVLDWVELALDGDIARLEASRLSLSYRHAALPPGCAVVRARLRTRPGNTADIIARMQDIRAARDAAQPVRARTGGSTFRNPDGQKAWELIDAAGCRGLSRGGAQVSEKHCNFLLNTGEATAADLEALGEEIRQRVQASCGTTLHWEIKRIGIPFHHPECQS</sequence>
<evidence type="ECO:0000255" key="1">
    <source>
        <dbReference type="HAMAP-Rule" id="MF_00037"/>
    </source>
</evidence>
<reference key="1">
    <citation type="journal article" date="2007" name="J. Bacteriol.">
        <title>Genome sequence analysis of the emerging human pathogenic acetic acid bacterium Granulibacter bethesdensis.</title>
        <authorList>
            <person name="Greenberg D.E."/>
            <person name="Porcella S.F."/>
            <person name="Zelazny A.M."/>
            <person name="Virtaneva K."/>
            <person name="Sturdevant D.E."/>
            <person name="Kupko J.J. III"/>
            <person name="Barbian K.D."/>
            <person name="Babar A."/>
            <person name="Dorward D.W."/>
            <person name="Holland S.M."/>
        </authorList>
    </citation>
    <scope>NUCLEOTIDE SEQUENCE [LARGE SCALE GENOMIC DNA]</scope>
    <source>
        <strain>ATCC BAA-1260 / CGDNIH1</strain>
    </source>
</reference>
<comment type="function">
    <text evidence="1">Cell wall formation.</text>
</comment>
<comment type="catalytic activity">
    <reaction evidence="1">
        <text>UDP-N-acetyl-alpha-D-muramate + NADP(+) = UDP-N-acetyl-3-O-(1-carboxyvinyl)-alpha-D-glucosamine + NADPH + H(+)</text>
        <dbReference type="Rhea" id="RHEA:12248"/>
        <dbReference type="ChEBI" id="CHEBI:15378"/>
        <dbReference type="ChEBI" id="CHEBI:57783"/>
        <dbReference type="ChEBI" id="CHEBI:58349"/>
        <dbReference type="ChEBI" id="CHEBI:68483"/>
        <dbReference type="ChEBI" id="CHEBI:70757"/>
        <dbReference type="EC" id="1.3.1.98"/>
    </reaction>
</comment>
<comment type="cofactor">
    <cofactor evidence="1">
        <name>FAD</name>
        <dbReference type="ChEBI" id="CHEBI:57692"/>
    </cofactor>
</comment>
<comment type="pathway">
    <text evidence="1">Cell wall biogenesis; peptidoglycan biosynthesis.</text>
</comment>
<comment type="subcellular location">
    <subcellularLocation>
        <location evidence="1">Cytoplasm</location>
    </subcellularLocation>
</comment>
<comment type="similarity">
    <text evidence="1">Belongs to the MurB family.</text>
</comment>